<comment type="function">
    <text evidence="2">Together with an NADPH cytochrome P450 the enzyme system catalyzes the terminal hydroxylation as the first step in the assimilation of alkanes and fatty acids.</text>
</comment>
<comment type="cofactor">
    <cofactor evidence="1">
        <name>heme</name>
        <dbReference type="ChEBI" id="CHEBI:30413"/>
    </cofactor>
</comment>
<comment type="similarity">
    <text evidence="5">Belongs to the cytochrome P450 family.</text>
</comment>
<gene>
    <name type="ORF">ARB_01131</name>
</gene>
<organism>
    <name type="scientific">Arthroderma benhamiae (strain ATCC MYA-4681 / CBS 112371)</name>
    <name type="common">Trichophyton mentagrophytes</name>
    <dbReference type="NCBI Taxonomy" id="663331"/>
    <lineage>
        <taxon>Eukaryota</taxon>
        <taxon>Fungi</taxon>
        <taxon>Dikarya</taxon>
        <taxon>Ascomycota</taxon>
        <taxon>Pezizomycotina</taxon>
        <taxon>Eurotiomycetes</taxon>
        <taxon>Eurotiomycetidae</taxon>
        <taxon>Onygenales</taxon>
        <taxon>Arthrodermataceae</taxon>
        <taxon>Trichophyton</taxon>
    </lineage>
</organism>
<dbReference type="EC" id="1.14.14.-" evidence="2"/>
<dbReference type="EMBL" id="ABSU01000018">
    <property type="protein sequence ID" value="EFE31878.1"/>
    <property type="molecule type" value="Genomic_DNA"/>
</dbReference>
<dbReference type="RefSeq" id="XP_003012518.1">
    <property type="nucleotide sequence ID" value="XM_003012472.1"/>
</dbReference>
<dbReference type="SMR" id="D4AY62"/>
<dbReference type="STRING" id="663331.D4AY62"/>
<dbReference type="GeneID" id="9526589"/>
<dbReference type="KEGG" id="abe:ARB_01131"/>
<dbReference type="eggNOG" id="KOG0157">
    <property type="taxonomic scope" value="Eukaryota"/>
</dbReference>
<dbReference type="HOGENOM" id="CLU_001570_27_0_1"/>
<dbReference type="OMA" id="FRIAPWH"/>
<dbReference type="Proteomes" id="UP000008866">
    <property type="component" value="Unassembled WGS sequence"/>
</dbReference>
<dbReference type="GO" id="GO:0020037">
    <property type="term" value="F:heme binding"/>
    <property type="evidence" value="ECO:0007669"/>
    <property type="project" value="InterPro"/>
</dbReference>
<dbReference type="GO" id="GO:0005506">
    <property type="term" value="F:iron ion binding"/>
    <property type="evidence" value="ECO:0007669"/>
    <property type="project" value="InterPro"/>
</dbReference>
<dbReference type="GO" id="GO:0004497">
    <property type="term" value="F:monooxygenase activity"/>
    <property type="evidence" value="ECO:0007669"/>
    <property type="project" value="UniProtKB-KW"/>
</dbReference>
<dbReference type="GO" id="GO:0016705">
    <property type="term" value="F:oxidoreductase activity, acting on paired donors, with incorporation or reduction of molecular oxygen"/>
    <property type="evidence" value="ECO:0007669"/>
    <property type="project" value="InterPro"/>
</dbReference>
<dbReference type="CDD" id="cd11063">
    <property type="entry name" value="CYP52"/>
    <property type="match status" value="1"/>
</dbReference>
<dbReference type="Gene3D" id="1.10.630.10">
    <property type="entry name" value="Cytochrome P450"/>
    <property type="match status" value="1"/>
</dbReference>
<dbReference type="InterPro" id="IPR001128">
    <property type="entry name" value="Cyt_P450"/>
</dbReference>
<dbReference type="InterPro" id="IPR017972">
    <property type="entry name" value="Cyt_P450_CS"/>
</dbReference>
<dbReference type="InterPro" id="IPR047146">
    <property type="entry name" value="Cyt_P450_E_CYP52_fungi"/>
</dbReference>
<dbReference type="InterPro" id="IPR002401">
    <property type="entry name" value="Cyt_P450_E_grp-I"/>
</dbReference>
<dbReference type="InterPro" id="IPR036396">
    <property type="entry name" value="Cyt_P450_sf"/>
</dbReference>
<dbReference type="PANTHER" id="PTHR24287:SF18">
    <property type="entry name" value="CYTOCHROME P450 MONOOXYGENASE APDE-RELATED"/>
    <property type="match status" value="1"/>
</dbReference>
<dbReference type="PANTHER" id="PTHR24287">
    <property type="entry name" value="P450, PUTATIVE (EUROFUNG)-RELATED"/>
    <property type="match status" value="1"/>
</dbReference>
<dbReference type="Pfam" id="PF00067">
    <property type="entry name" value="p450"/>
    <property type="match status" value="1"/>
</dbReference>
<dbReference type="PRINTS" id="PR00463">
    <property type="entry name" value="EP450I"/>
</dbReference>
<dbReference type="PRINTS" id="PR00385">
    <property type="entry name" value="P450"/>
</dbReference>
<dbReference type="SUPFAM" id="SSF48264">
    <property type="entry name" value="Cytochrome P450"/>
    <property type="match status" value="1"/>
</dbReference>
<dbReference type="PROSITE" id="PS00086">
    <property type="entry name" value="CYTOCHROME_P450"/>
    <property type="match status" value="1"/>
</dbReference>
<keyword id="KW-0325">Glycoprotein</keyword>
<keyword id="KW-0349">Heme</keyword>
<keyword id="KW-0408">Iron</keyword>
<keyword id="KW-0479">Metal-binding</keyword>
<keyword id="KW-0503">Monooxygenase</keyword>
<keyword id="KW-0560">Oxidoreductase</keyword>
<keyword id="KW-1185">Reference proteome</keyword>
<keyword id="KW-0732">Signal</keyword>
<feature type="signal peptide" evidence="3">
    <location>
        <begin position="1"/>
        <end position="21"/>
    </location>
</feature>
<feature type="chain" id="PRO_0000434501" description="Cytochrome P450 ARB_01131" evidence="3">
    <location>
        <begin position="22"/>
        <end position="499"/>
    </location>
</feature>
<feature type="binding site" description="axial binding residue" evidence="1">
    <location>
        <position position="437"/>
    </location>
    <ligand>
        <name>heme</name>
        <dbReference type="ChEBI" id="CHEBI:30413"/>
    </ligand>
    <ligandPart>
        <name>Fe</name>
        <dbReference type="ChEBI" id="CHEBI:18248"/>
    </ligandPart>
</feature>
<feature type="glycosylation site" description="N-linked (GlcNAc...) asparagine" evidence="4">
    <location>
        <position position="23"/>
    </location>
</feature>
<name>A1131_ARTBC</name>
<reference key="1">
    <citation type="journal article" date="2011" name="Genome Biol.">
        <title>Comparative and functional genomics provide insights into the pathogenicity of dermatophytic fungi.</title>
        <authorList>
            <person name="Burmester A."/>
            <person name="Shelest E."/>
            <person name="Gloeckner G."/>
            <person name="Heddergott C."/>
            <person name="Schindler S."/>
            <person name="Staib P."/>
            <person name="Heidel A."/>
            <person name="Felder M."/>
            <person name="Petzold A."/>
            <person name="Szafranski K."/>
            <person name="Feuermann M."/>
            <person name="Pedruzzi I."/>
            <person name="Priebe S."/>
            <person name="Groth M."/>
            <person name="Winkler R."/>
            <person name="Li W."/>
            <person name="Kniemeyer O."/>
            <person name="Schroeckh V."/>
            <person name="Hertweck C."/>
            <person name="Hube B."/>
            <person name="White T.C."/>
            <person name="Platzer M."/>
            <person name="Guthke R."/>
            <person name="Heitman J."/>
            <person name="Woestemeyer J."/>
            <person name="Zipfel P.F."/>
            <person name="Monod M."/>
            <person name="Brakhage A.A."/>
        </authorList>
    </citation>
    <scope>NUCLEOTIDE SEQUENCE [LARGE SCALE GENOMIC DNA]</scope>
    <source>
        <strain>ATCC MYA-4681 / CBS 112371</strain>
    </source>
</reference>
<evidence type="ECO:0000250" key="1">
    <source>
        <dbReference type="UniProtKB" id="P04798"/>
    </source>
</evidence>
<evidence type="ECO:0000250" key="2">
    <source>
        <dbReference type="UniProtKB" id="P16141"/>
    </source>
</evidence>
<evidence type="ECO:0000255" key="3"/>
<evidence type="ECO:0000255" key="4">
    <source>
        <dbReference type="PROSITE-ProRule" id="PRU00498"/>
    </source>
</evidence>
<evidence type="ECO:0000305" key="5"/>
<sequence>MLSLIVACLVLPLICYKLVRSYNQSREDEQFAASKGCQPPRKWSAKWPLGLDMLVKAVRYEKRQQILQLFLEEVAASGSTFEQNLLFARGIDTVEPRNIEAILSTQFTGSGIFTQDGPQWKHSRELLRPQFMTNRFRNFEQIRHAVNNLISSVPDSGVVDLQPLFFRLTFETTLFLLFGHYLPSLKSEGITGHESQFANAFNLGQDYLAQRGRLGDLYWLLGGREFKDACKVCHDFIDNAVQKALKHSSREKKVSDEEKETYVFIDALVQETREPSVLRDQCLNILLAGRDTTACCLTWTLRLLVQHPDVLSKLRDEVRDTIGMGPDAPDPTISQVKKLSYLSLVIKEVLRLYPSVPVNSRAAVKTTTLPTGGGPDGSAPLLVRRGEAVGYCVYAMHRRKDIYGPDADCFRPERWENDALKDVGYGYLPFNGGPRICLGQEFALLEVGYTVVRLLQTFETIEEAETKVPGAPLGEEKQTLTLVVSSGEGCWVSMKKGTK</sequence>
<protein>
    <recommendedName>
        <fullName evidence="5">Cytochrome P450 ARB_01131</fullName>
        <ecNumber evidence="2">1.14.14.-</ecNumber>
    </recommendedName>
</protein>
<proteinExistence type="inferred from homology"/>
<accession>D4AY62</accession>